<evidence type="ECO:0000255" key="1">
    <source>
        <dbReference type="HAMAP-Rule" id="MF_00151"/>
    </source>
</evidence>
<dbReference type="EC" id="2.7.7.3" evidence="1"/>
<dbReference type="EMBL" id="CP000922">
    <property type="protein sequence ID" value="ACJ34211.1"/>
    <property type="molecule type" value="Genomic_DNA"/>
</dbReference>
<dbReference type="RefSeq" id="WP_006321418.1">
    <property type="nucleotide sequence ID" value="NC_011567.1"/>
</dbReference>
<dbReference type="SMR" id="B7GGK2"/>
<dbReference type="STRING" id="491915.Aflv_1850"/>
<dbReference type="GeneID" id="7038103"/>
<dbReference type="KEGG" id="afl:Aflv_1850"/>
<dbReference type="eggNOG" id="COG0669">
    <property type="taxonomic scope" value="Bacteria"/>
</dbReference>
<dbReference type="HOGENOM" id="CLU_100149_0_1_9"/>
<dbReference type="UniPathway" id="UPA00241">
    <property type="reaction ID" value="UER00355"/>
</dbReference>
<dbReference type="Proteomes" id="UP000000742">
    <property type="component" value="Chromosome"/>
</dbReference>
<dbReference type="GO" id="GO:0005737">
    <property type="term" value="C:cytoplasm"/>
    <property type="evidence" value="ECO:0007669"/>
    <property type="project" value="UniProtKB-SubCell"/>
</dbReference>
<dbReference type="GO" id="GO:0005524">
    <property type="term" value="F:ATP binding"/>
    <property type="evidence" value="ECO:0007669"/>
    <property type="project" value="UniProtKB-KW"/>
</dbReference>
<dbReference type="GO" id="GO:0004595">
    <property type="term" value="F:pantetheine-phosphate adenylyltransferase activity"/>
    <property type="evidence" value="ECO:0007669"/>
    <property type="project" value="UniProtKB-UniRule"/>
</dbReference>
<dbReference type="GO" id="GO:0015937">
    <property type="term" value="P:coenzyme A biosynthetic process"/>
    <property type="evidence" value="ECO:0007669"/>
    <property type="project" value="UniProtKB-UniRule"/>
</dbReference>
<dbReference type="CDD" id="cd02163">
    <property type="entry name" value="PPAT"/>
    <property type="match status" value="1"/>
</dbReference>
<dbReference type="FunFam" id="3.40.50.620:FF:000012">
    <property type="entry name" value="Phosphopantetheine adenylyltransferase"/>
    <property type="match status" value="1"/>
</dbReference>
<dbReference type="Gene3D" id="3.40.50.620">
    <property type="entry name" value="HUPs"/>
    <property type="match status" value="1"/>
</dbReference>
<dbReference type="HAMAP" id="MF_00151">
    <property type="entry name" value="PPAT_bact"/>
    <property type="match status" value="1"/>
</dbReference>
<dbReference type="InterPro" id="IPR004821">
    <property type="entry name" value="Cyt_trans-like"/>
</dbReference>
<dbReference type="InterPro" id="IPR001980">
    <property type="entry name" value="PPAT"/>
</dbReference>
<dbReference type="InterPro" id="IPR014729">
    <property type="entry name" value="Rossmann-like_a/b/a_fold"/>
</dbReference>
<dbReference type="NCBIfam" id="TIGR01510">
    <property type="entry name" value="coaD_prev_kdtB"/>
    <property type="match status" value="1"/>
</dbReference>
<dbReference type="NCBIfam" id="TIGR00125">
    <property type="entry name" value="cyt_tran_rel"/>
    <property type="match status" value="1"/>
</dbReference>
<dbReference type="PANTHER" id="PTHR21342">
    <property type="entry name" value="PHOSPHOPANTETHEINE ADENYLYLTRANSFERASE"/>
    <property type="match status" value="1"/>
</dbReference>
<dbReference type="PANTHER" id="PTHR21342:SF1">
    <property type="entry name" value="PHOSPHOPANTETHEINE ADENYLYLTRANSFERASE"/>
    <property type="match status" value="1"/>
</dbReference>
<dbReference type="Pfam" id="PF01467">
    <property type="entry name" value="CTP_transf_like"/>
    <property type="match status" value="1"/>
</dbReference>
<dbReference type="PRINTS" id="PR01020">
    <property type="entry name" value="LPSBIOSNTHSS"/>
</dbReference>
<dbReference type="SUPFAM" id="SSF52374">
    <property type="entry name" value="Nucleotidylyl transferase"/>
    <property type="match status" value="1"/>
</dbReference>
<reference key="1">
    <citation type="journal article" date="2008" name="Genome Biol.">
        <title>Encapsulated in silica: genome, proteome and physiology of the thermophilic bacterium Anoxybacillus flavithermus WK1.</title>
        <authorList>
            <person name="Saw J.H."/>
            <person name="Mountain B.W."/>
            <person name="Feng L."/>
            <person name="Omelchenko M.V."/>
            <person name="Hou S."/>
            <person name="Saito J.A."/>
            <person name="Stott M.B."/>
            <person name="Li D."/>
            <person name="Zhao G."/>
            <person name="Wu J."/>
            <person name="Galperin M.Y."/>
            <person name="Koonin E.V."/>
            <person name="Makarova K.S."/>
            <person name="Wolf Y.I."/>
            <person name="Rigden D.J."/>
            <person name="Dunfield P.F."/>
            <person name="Wang L."/>
            <person name="Alam M."/>
        </authorList>
    </citation>
    <scope>NUCLEOTIDE SEQUENCE [LARGE SCALE GENOMIC DNA]</scope>
    <source>
        <strain>DSM 21510 / WK1</strain>
    </source>
</reference>
<name>COAD_ANOFW</name>
<organism>
    <name type="scientific">Anoxybacillus flavithermus (strain DSM 21510 / WK1)</name>
    <dbReference type="NCBI Taxonomy" id="491915"/>
    <lineage>
        <taxon>Bacteria</taxon>
        <taxon>Bacillati</taxon>
        <taxon>Bacillota</taxon>
        <taxon>Bacilli</taxon>
        <taxon>Bacillales</taxon>
        <taxon>Anoxybacillaceae</taxon>
        <taxon>Anoxybacillus</taxon>
    </lineage>
</organism>
<comment type="function">
    <text evidence="1">Reversibly transfers an adenylyl group from ATP to 4'-phosphopantetheine, yielding dephospho-CoA (dPCoA) and pyrophosphate.</text>
</comment>
<comment type="catalytic activity">
    <reaction evidence="1">
        <text>(R)-4'-phosphopantetheine + ATP + H(+) = 3'-dephospho-CoA + diphosphate</text>
        <dbReference type="Rhea" id="RHEA:19801"/>
        <dbReference type="ChEBI" id="CHEBI:15378"/>
        <dbReference type="ChEBI" id="CHEBI:30616"/>
        <dbReference type="ChEBI" id="CHEBI:33019"/>
        <dbReference type="ChEBI" id="CHEBI:57328"/>
        <dbReference type="ChEBI" id="CHEBI:61723"/>
        <dbReference type="EC" id="2.7.7.3"/>
    </reaction>
</comment>
<comment type="cofactor">
    <cofactor evidence="1">
        <name>Mg(2+)</name>
        <dbReference type="ChEBI" id="CHEBI:18420"/>
    </cofactor>
</comment>
<comment type="pathway">
    <text evidence="1">Cofactor biosynthesis; coenzyme A biosynthesis; CoA from (R)-pantothenate: step 4/5.</text>
</comment>
<comment type="subunit">
    <text evidence="1">Homohexamer.</text>
</comment>
<comment type="subcellular location">
    <subcellularLocation>
        <location evidence="1">Cytoplasm</location>
    </subcellularLocation>
</comment>
<comment type="similarity">
    <text evidence="1">Belongs to the bacterial CoaD family.</text>
</comment>
<feature type="chain" id="PRO_1000118065" description="Phosphopantetheine adenylyltransferase">
    <location>
        <begin position="1"/>
        <end position="165"/>
    </location>
</feature>
<feature type="binding site" evidence="1">
    <location>
        <begin position="10"/>
        <end position="11"/>
    </location>
    <ligand>
        <name>ATP</name>
        <dbReference type="ChEBI" id="CHEBI:30616"/>
    </ligand>
</feature>
<feature type="binding site" evidence="1">
    <location>
        <position position="10"/>
    </location>
    <ligand>
        <name>substrate</name>
    </ligand>
</feature>
<feature type="binding site" evidence="1">
    <location>
        <position position="18"/>
    </location>
    <ligand>
        <name>ATP</name>
        <dbReference type="ChEBI" id="CHEBI:30616"/>
    </ligand>
</feature>
<feature type="binding site" evidence="1">
    <location>
        <position position="42"/>
    </location>
    <ligand>
        <name>substrate</name>
    </ligand>
</feature>
<feature type="binding site" evidence="1">
    <location>
        <position position="74"/>
    </location>
    <ligand>
        <name>substrate</name>
    </ligand>
</feature>
<feature type="binding site" evidence="1">
    <location>
        <position position="88"/>
    </location>
    <ligand>
        <name>substrate</name>
    </ligand>
</feature>
<feature type="binding site" evidence="1">
    <location>
        <begin position="89"/>
        <end position="91"/>
    </location>
    <ligand>
        <name>ATP</name>
        <dbReference type="ChEBI" id="CHEBI:30616"/>
    </ligand>
</feature>
<feature type="binding site" evidence="1">
    <location>
        <position position="99"/>
    </location>
    <ligand>
        <name>ATP</name>
        <dbReference type="ChEBI" id="CHEBI:30616"/>
    </ligand>
</feature>
<feature type="binding site" evidence="1">
    <location>
        <begin position="124"/>
        <end position="130"/>
    </location>
    <ligand>
        <name>ATP</name>
        <dbReference type="ChEBI" id="CHEBI:30616"/>
    </ligand>
</feature>
<feature type="site" description="Transition state stabilizer" evidence="1">
    <location>
        <position position="18"/>
    </location>
</feature>
<accession>B7GGK2</accession>
<sequence>MASIAVCPGSFDPVTYGHLDIIRRGAKVFDKVYVVVLNNSSKKPLFSAEERVQLLEEVTKDLHNVVVDSYQGLLVDYAKSKHASAILRGLRAVSDFEYEMQITSMNRILNEQIETFFMMTNNQYSFLSSSIVKEVAKYNGNISELVPKVVEEALRKKFAHAENHL</sequence>
<keyword id="KW-0067">ATP-binding</keyword>
<keyword id="KW-0173">Coenzyme A biosynthesis</keyword>
<keyword id="KW-0963">Cytoplasm</keyword>
<keyword id="KW-0460">Magnesium</keyword>
<keyword id="KW-0547">Nucleotide-binding</keyword>
<keyword id="KW-0548">Nucleotidyltransferase</keyword>
<keyword id="KW-0808">Transferase</keyword>
<protein>
    <recommendedName>
        <fullName evidence="1">Phosphopantetheine adenylyltransferase</fullName>
        <ecNumber evidence="1">2.7.7.3</ecNumber>
    </recommendedName>
    <alternativeName>
        <fullName evidence="1">Dephospho-CoA pyrophosphorylase</fullName>
    </alternativeName>
    <alternativeName>
        <fullName evidence="1">Pantetheine-phosphate adenylyltransferase</fullName>
        <shortName evidence="1">PPAT</shortName>
    </alternativeName>
</protein>
<gene>
    <name evidence="1" type="primary">coaD</name>
    <name type="ordered locus">Aflv_1850</name>
</gene>
<proteinExistence type="inferred from homology"/>